<feature type="chain" id="PRO_0000435902" description="Actin-binding protein Smlt3054">
    <location>
        <begin position="1"/>
        <end position="274"/>
    </location>
</feature>
<feature type="repeat" description="ANK 1" evidence="1">
    <location>
        <begin position="192"/>
        <end position="221"/>
    </location>
</feature>
<feature type="repeat" description="ANK 2" evidence="1">
    <location>
        <begin position="225"/>
        <end position="254"/>
    </location>
</feature>
<feature type="region of interest" description="Disordered" evidence="2">
    <location>
        <begin position="251"/>
        <end position="274"/>
    </location>
</feature>
<evidence type="ECO:0000255" key="1"/>
<evidence type="ECO:0000256" key="2">
    <source>
        <dbReference type="SAM" id="MobiDB-lite"/>
    </source>
</evidence>
<evidence type="ECO:0000269" key="3">
    <source ref="2"/>
</evidence>
<evidence type="ECO:0000303" key="4">
    <source ref="2"/>
</evidence>
<evidence type="ECO:0000312" key="5">
    <source>
        <dbReference type="EMBL" id="CAQ46503.1"/>
    </source>
</evidence>
<dbReference type="EMBL" id="AM743169">
    <property type="protein sequence ID" value="CAQ46503.1"/>
    <property type="molecule type" value="Genomic_DNA"/>
</dbReference>
<dbReference type="SMR" id="B2FKA7"/>
<dbReference type="EnsemblBacteria" id="CAQ46503">
    <property type="protein sequence ID" value="CAQ46503"/>
    <property type="gene ID" value="Smlt3054"/>
</dbReference>
<dbReference type="KEGG" id="sml:Smlt3054"/>
<dbReference type="eggNOG" id="COG0666">
    <property type="taxonomic scope" value="Bacteria"/>
</dbReference>
<dbReference type="HOGENOM" id="CLU_1019075_0_0_6"/>
<dbReference type="Proteomes" id="UP000008840">
    <property type="component" value="Chromosome"/>
</dbReference>
<dbReference type="GO" id="GO:0005576">
    <property type="term" value="C:extracellular region"/>
    <property type="evidence" value="ECO:0000314"/>
    <property type="project" value="UniProtKB"/>
</dbReference>
<dbReference type="GO" id="GO:0042597">
    <property type="term" value="C:periplasmic space"/>
    <property type="evidence" value="ECO:0007669"/>
    <property type="project" value="UniProtKB-SubCell"/>
</dbReference>
<dbReference type="GO" id="GO:0051015">
    <property type="term" value="F:actin filament binding"/>
    <property type="evidence" value="ECO:0000314"/>
    <property type="project" value="UniProtKB"/>
</dbReference>
<dbReference type="GO" id="GO:0042803">
    <property type="term" value="F:protein homodimerization activity"/>
    <property type="evidence" value="ECO:0000314"/>
    <property type="project" value="UniProtKB"/>
</dbReference>
<dbReference type="GO" id="GO:0007015">
    <property type="term" value="P:actin filament organization"/>
    <property type="evidence" value="ECO:0000314"/>
    <property type="project" value="UniProtKB"/>
</dbReference>
<dbReference type="Gene3D" id="1.25.40.20">
    <property type="entry name" value="Ankyrin repeat-containing domain"/>
    <property type="match status" value="1"/>
</dbReference>
<dbReference type="InterPro" id="IPR002110">
    <property type="entry name" value="Ankyrin_rpt"/>
</dbReference>
<dbReference type="InterPro" id="IPR036770">
    <property type="entry name" value="Ankyrin_rpt-contain_sf"/>
</dbReference>
<dbReference type="PANTHER" id="PTHR24171:SF9">
    <property type="entry name" value="ANKYRIN REPEAT DOMAIN-CONTAINING PROTEIN 39"/>
    <property type="match status" value="1"/>
</dbReference>
<dbReference type="PANTHER" id="PTHR24171">
    <property type="entry name" value="ANKYRIN REPEAT DOMAIN-CONTAINING PROTEIN 39-RELATED"/>
    <property type="match status" value="1"/>
</dbReference>
<dbReference type="Pfam" id="PF12796">
    <property type="entry name" value="Ank_2"/>
    <property type="match status" value="1"/>
</dbReference>
<dbReference type="SMART" id="SM00248">
    <property type="entry name" value="ANK"/>
    <property type="match status" value="2"/>
</dbReference>
<dbReference type="SUPFAM" id="SSF48403">
    <property type="entry name" value="Ankyrin repeat"/>
    <property type="match status" value="1"/>
</dbReference>
<dbReference type="PROSITE" id="PS50297">
    <property type="entry name" value="ANK_REP_REGION"/>
    <property type="match status" value="1"/>
</dbReference>
<dbReference type="PROSITE" id="PS50088">
    <property type="entry name" value="ANK_REPEAT"/>
    <property type="match status" value="1"/>
</dbReference>
<gene>
    <name evidence="5" type="ordered locus">Smlt3054</name>
</gene>
<accession>B2FKA7</accession>
<keyword id="KW-0009">Actin-binding</keyword>
<keyword id="KW-0040">ANK repeat</keyword>
<keyword id="KW-0574">Periplasm</keyword>
<keyword id="KW-1185">Reference proteome</keyword>
<keyword id="KW-0677">Repeat</keyword>
<keyword id="KW-0964">Secreted</keyword>
<reference key="1">
    <citation type="journal article" date="2008" name="Genome Biol.">
        <title>The complete genome, comparative and functional analysis of Stenotrophomonas maltophilia reveals an organism heavily shielded by drug resistance determinants.</title>
        <authorList>
            <person name="Crossman L.C."/>
            <person name="Gould V.C."/>
            <person name="Dow J.M."/>
            <person name="Vernikos G.S."/>
            <person name="Okazaki A."/>
            <person name="Sebaihia M."/>
            <person name="Saunders D."/>
            <person name="Arrowsmith C."/>
            <person name="Carver T."/>
            <person name="Peters N."/>
            <person name="Adlem E."/>
            <person name="Kerhornou A."/>
            <person name="Lord A."/>
            <person name="Murphy L."/>
            <person name="Seeger K."/>
            <person name="Squares R."/>
            <person name="Rutter S."/>
            <person name="Quail M.A."/>
            <person name="Rajandream M.A."/>
            <person name="Harris D."/>
            <person name="Churcher C."/>
            <person name="Bentley S.D."/>
            <person name="Parkhill J."/>
            <person name="Thomson N.R."/>
            <person name="Avison M.B."/>
        </authorList>
    </citation>
    <scope>NUCLEOTIDE SEQUENCE [LARGE SCALE GENOMIC DNA]</scope>
    <source>
        <strain>K279a</strain>
    </source>
</reference>
<reference key="2">
    <citation type="journal article" date="2016" name="ACS Infect. Dis.">
        <title>A secreted ankyrin-repeat protein from clinical Stenotrophomonas maltophilia isolates disrupts actin cytoskeletal structure.</title>
        <authorList>
            <person name="MacDonald L.C."/>
            <person name="O'Keefe S."/>
            <person name="Parnes M.-F."/>
            <person name="MacDonald H."/>
            <person name="Stretz L."/>
            <person name="Templer S.J."/>
            <person name="Wong E.L."/>
            <person name="Berger B.W."/>
        </authorList>
    </citation>
    <scope>FUNCTION</scope>
    <scope>SUBCELLULAR LOCATION</scope>
    <scope>INDUCTION</scope>
    <scope>SUBUNIT</scope>
    <source>
        <strain>K279a</strain>
    </source>
</reference>
<sequence>MEMDIQESLLRLLRPLGLQRAEALAGALAREAGASKGLHDSQVLARAHALSVAPVEGRLGDLVWQVRQREHDGAPQVDLRWGLHRLGLDAPSRASTRDLVRAYERRLADRNEPMVYSTLAERVAGSMAEHTSLFQGMAMAVEEARARRSDANRLRENAPWQGWLVGASRAGHEAALLACIGMGADARLPDASGNTPLHHAARFGHFSLVTPLVEAGADVAALNAHGWAPLHLAALHKHARACLHLMAHGANPEQPGWRGRTPTRMHRHEQTQAL</sequence>
<protein>
    <recommendedName>
        <fullName evidence="4">Actin-binding protein Smlt3054</fullName>
    </recommendedName>
    <alternativeName>
        <fullName evidence="4">Ankyrin repeat protein</fullName>
    </alternativeName>
</protein>
<name>ABP_STRMK</name>
<comment type="function">
    <text evidence="3">Directly binds F-actin, which results in thickened and distorted F-actin fibers, and affects cellular F-actin localization. Thus, may be a host effector whose function is to disrupt host actin cytoskeletal structure, which may enhance invasion.</text>
</comment>
<comment type="subunit">
    <text evidence="3">Exists as a dimer as well as a higher order oligomer.</text>
</comment>
<comment type="subcellular location">
    <subcellularLocation>
        <location evidence="3">Secreted</location>
    </subcellularLocation>
    <subcellularLocation>
        <location evidence="3">Periplasm</location>
    </subcellularLocation>
</comment>
<comment type="induction">
    <text evidence="3">Expressed in S.maltophilia clinical isolate K279a grown under standard conditions (at protein level).</text>
</comment>
<organism>
    <name type="scientific">Stenotrophomonas maltophilia (strain K279a)</name>
    <dbReference type="NCBI Taxonomy" id="522373"/>
    <lineage>
        <taxon>Bacteria</taxon>
        <taxon>Pseudomonadati</taxon>
        <taxon>Pseudomonadota</taxon>
        <taxon>Gammaproteobacteria</taxon>
        <taxon>Lysobacterales</taxon>
        <taxon>Lysobacteraceae</taxon>
        <taxon>Stenotrophomonas</taxon>
        <taxon>Stenotrophomonas maltophilia group</taxon>
    </lineage>
</organism>
<proteinExistence type="evidence at protein level"/>